<proteinExistence type="inferred from homology"/>
<accession>Q4WWD3</accession>
<comment type="function">
    <text evidence="1">ATP-dependent RNA helicase involved in mRNA turnover, and more specifically in mRNA decapping. Is involved in G1/S DNA-damage checkpoint recovery, probably through the regulation of the translational status of a subset of mRNAs. May also have a role in translation and mRNA nuclear export (By similarity).</text>
</comment>
<comment type="catalytic activity">
    <reaction>
        <text>ATP + H2O = ADP + phosphate + H(+)</text>
        <dbReference type="Rhea" id="RHEA:13065"/>
        <dbReference type="ChEBI" id="CHEBI:15377"/>
        <dbReference type="ChEBI" id="CHEBI:15378"/>
        <dbReference type="ChEBI" id="CHEBI:30616"/>
        <dbReference type="ChEBI" id="CHEBI:43474"/>
        <dbReference type="ChEBI" id="CHEBI:456216"/>
        <dbReference type="EC" id="3.6.4.13"/>
    </reaction>
</comment>
<comment type="subcellular location">
    <subcellularLocation>
        <location evidence="1">Cytoplasm</location>
        <location evidence="1">P-body</location>
    </subcellularLocation>
    <text evidence="1">Is concentrated in several cytoplasmic foci called P bodies (or cytoplasmic processing bodies) which represent sites of mRNA decapping and 5' to 3' exonucleotidic decay.</text>
</comment>
<comment type="domain">
    <text>The Q motif is unique to and characteristic of the DEAD box family of RNA helicases and controls ATP binding and hydrolysis.</text>
</comment>
<comment type="similarity">
    <text evidence="5">Belongs to the DEAD box helicase family. DDX6/DHH1 subfamily.</text>
</comment>
<protein>
    <recommendedName>
        <fullName>ATP-dependent RNA helicase dhh1</fullName>
        <ecNumber>3.6.4.13</ecNumber>
    </recommendedName>
</protein>
<name>DHH1_ASPFU</name>
<keyword id="KW-0067">ATP-binding</keyword>
<keyword id="KW-0963">Cytoplasm</keyword>
<keyword id="KW-0347">Helicase</keyword>
<keyword id="KW-0378">Hydrolase</keyword>
<keyword id="KW-0507">mRNA processing</keyword>
<keyword id="KW-0509">mRNA transport</keyword>
<keyword id="KW-0547">Nucleotide-binding</keyword>
<keyword id="KW-1185">Reference proteome</keyword>
<keyword id="KW-0694">RNA-binding</keyword>
<keyword id="KW-0810">Translation regulation</keyword>
<keyword id="KW-0813">Transport</keyword>
<feature type="chain" id="PRO_0000232184" description="ATP-dependent RNA helicase dhh1">
    <location>
        <begin position="1"/>
        <end position="507"/>
    </location>
</feature>
<feature type="domain" description="Helicase ATP-binding" evidence="2">
    <location>
        <begin position="78"/>
        <end position="248"/>
    </location>
</feature>
<feature type="domain" description="Helicase C-terminal" evidence="3">
    <location>
        <begin position="258"/>
        <end position="418"/>
    </location>
</feature>
<feature type="region of interest" description="Disordered" evidence="4">
    <location>
        <begin position="445"/>
        <end position="507"/>
    </location>
</feature>
<feature type="short sequence motif" description="Q motif">
    <location>
        <begin position="47"/>
        <end position="75"/>
    </location>
</feature>
<feature type="short sequence motif" description="DEAD box">
    <location>
        <begin position="196"/>
        <end position="199"/>
    </location>
</feature>
<feature type="compositionally biased region" description="Polar residues" evidence="4">
    <location>
        <begin position="495"/>
        <end position="507"/>
    </location>
</feature>
<feature type="binding site" evidence="2">
    <location>
        <begin position="91"/>
        <end position="98"/>
    </location>
    <ligand>
        <name>ATP</name>
        <dbReference type="ChEBI" id="CHEBI:30616"/>
    </ligand>
</feature>
<dbReference type="EC" id="3.6.4.13"/>
<dbReference type="EMBL" id="AAHF01000002">
    <property type="protein sequence ID" value="EAL93020.1"/>
    <property type="molecule type" value="Genomic_DNA"/>
</dbReference>
<dbReference type="RefSeq" id="XP_755058.1">
    <property type="nucleotide sequence ID" value="XM_749965.1"/>
</dbReference>
<dbReference type="SMR" id="Q4WWD3"/>
<dbReference type="FunCoup" id="Q4WWD3">
    <property type="interactions" value="1327"/>
</dbReference>
<dbReference type="STRING" id="330879.Q4WWD3"/>
<dbReference type="EnsemblFungi" id="EAL93020">
    <property type="protein sequence ID" value="EAL93020"/>
    <property type="gene ID" value="AFUA_3G05430"/>
</dbReference>
<dbReference type="GeneID" id="3512659"/>
<dbReference type="KEGG" id="afm:AFUA_3G05430"/>
<dbReference type="VEuPathDB" id="FungiDB:Afu3g05430"/>
<dbReference type="eggNOG" id="KOG0326">
    <property type="taxonomic scope" value="Eukaryota"/>
</dbReference>
<dbReference type="HOGENOM" id="CLU_003041_30_0_1"/>
<dbReference type="InParanoid" id="Q4WWD3"/>
<dbReference type="OMA" id="TYEDRHT"/>
<dbReference type="OrthoDB" id="10265785at2759"/>
<dbReference type="Proteomes" id="UP000002530">
    <property type="component" value="Chromosome 3"/>
</dbReference>
<dbReference type="GO" id="GO:0010494">
    <property type="term" value="C:cytoplasmic stress granule"/>
    <property type="evidence" value="ECO:0000318"/>
    <property type="project" value="GO_Central"/>
</dbReference>
<dbReference type="GO" id="GO:0000932">
    <property type="term" value="C:P-body"/>
    <property type="evidence" value="ECO:0000318"/>
    <property type="project" value="GO_Central"/>
</dbReference>
<dbReference type="GO" id="GO:0005524">
    <property type="term" value="F:ATP binding"/>
    <property type="evidence" value="ECO:0007669"/>
    <property type="project" value="UniProtKB-KW"/>
</dbReference>
<dbReference type="GO" id="GO:0016887">
    <property type="term" value="F:ATP hydrolysis activity"/>
    <property type="evidence" value="ECO:0007669"/>
    <property type="project" value="RHEA"/>
</dbReference>
<dbReference type="GO" id="GO:0003729">
    <property type="term" value="F:mRNA binding"/>
    <property type="evidence" value="ECO:0000318"/>
    <property type="project" value="GO_Central"/>
</dbReference>
<dbReference type="GO" id="GO:0003724">
    <property type="term" value="F:RNA helicase activity"/>
    <property type="evidence" value="ECO:0007669"/>
    <property type="project" value="UniProtKB-EC"/>
</dbReference>
<dbReference type="GO" id="GO:0006397">
    <property type="term" value="P:mRNA processing"/>
    <property type="evidence" value="ECO:0007669"/>
    <property type="project" value="UniProtKB-KW"/>
</dbReference>
<dbReference type="GO" id="GO:0051028">
    <property type="term" value="P:mRNA transport"/>
    <property type="evidence" value="ECO:0007669"/>
    <property type="project" value="UniProtKB-KW"/>
</dbReference>
<dbReference type="GO" id="GO:0017148">
    <property type="term" value="P:negative regulation of translation"/>
    <property type="evidence" value="ECO:0000318"/>
    <property type="project" value="GO_Central"/>
</dbReference>
<dbReference type="GO" id="GO:0033962">
    <property type="term" value="P:P-body assembly"/>
    <property type="evidence" value="ECO:0000318"/>
    <property type="project" value="GO_Central"/>
</dbReference>
<dbReference type="GO" id="GO:0034063">
    <property type="term" value="P:stress granule assembly"/>
    <property type="evidence" value="ECO:0000318"/>
    <property type="project" value="GO_Central"/>
</dbReference>
<dbReference type="CDD" id="cd17940">
    <property type="entry name" value="DEADc_DDX6"/>
    <property type="match status" value="1"/>
</dbReference>
<dbReference type="CDD" id="cd18787">
    <property type="entry name" value="SF2_C_DEAD"/>
    <property type="match status" value="1"/>
</dbReference>
<dbReference type="FunFam" id="3.40.50.300:FF:000114">
    <property type="entry name" value="ATP-dependent RNA helicase DDX6"/>
    <property type="match status" value="1"/>
</dbReference>
<dbReference type="FunFam" id="3.40.50.300:FF:000364">
    <property type="entry name" value="ATP-dependent RNA helicase DDX6"/>
    <property type="match status" value="1"/>
</dbReference>
<dbReference type="Gene3D" id="3.40.50.300">
    <property type="entry name" value="P-loop containing nucleotide triphosphate hydrolases"/>
    <property type="match status" value="2"/>
</dbReference>
<dbReference type="InterPro" id="IPR011545">
    <property type="entry name" value="DEAD/DEAH_box_helicase_dom"/>
</dbReference>
<dbReference type="InterPro" id="IPR014001">
    <property type="entry name" value="Helicase_ATP-bd"/>
</dbReference>
<dbReference type="InterPro" id="IPR001650">
    <property type="entry name" value="Helicase_C-like"/>
</dbReference>
<dbReference type="InterPro" id="IPR027417">
    <property type="entry name" value="P-loop_NTPase"/>
</dbReference>
<dbReference type="InterPro" id="IPR000629">
    <property type="entry name" value="RNA-helicase_DEAD-box_CS"/>
</dbReference>
<dbReference type="InterPro" id="IPR014014">
    <property type="entry name" value="RNA_helicase_DEAD_Q_motif"/>
</dbReference>
<dbReference type="PANTHER" id="PTHR47960">
    <property type="entry name" value="DEAD-BOX ATP-DEPENDENT RNA HELICASE 50"/>
    <property type="match status" value="1"/>
</dbReference>
<dbReference type="Pfam" id="PF00270">
    <property type="entry name" value="DEAD"/>
    <property type="match status" value="1"/>
</dbReference>
<dbReference type="Pfam" id="PF00271">
    <property type="entry name" value="Helicase_C"/>
    <property type="match status" value="1"/>
</dbReference>
<dbReference type="SMART" id="SM00487">
    <property type="entry name" value="DEXDc"/>
    <property type="match status" value="1"/>
</dbReference>
<dbReference type="SMART" id="SM00490">
    <property type="entry name" value="HELICc"/>
    <property type="match status" value="1"/>
</dbReference>
<dbReference type="SUPFAM" id="SSF52540">
    <property type="entry name" value="P-loop containing nucleoside triphosphate hydrolases"/>
    <property type="match status" value="1"/>
</dbReference>
<dbReference type="PROSITE" id="PS00039">
    <property type="entry name" value="DEAD_ATP_HELICASE"/>
    <property type="match status" value="1"/>
</dbReference>
<dbReference type="PROSITE" id="PS51192">
    <property type="entry name" value="HELICASE_ATP_BIND_1"/>
    <property type="match status" value="1"/>
</dbReference>
<dbReference type="PROSITE" id="PS51194">
    <property type="entry name" value="HELICASE_CTER"/>
    <property type="match status" value="1"/>
</dbReference>
<dbReference type="PROSITE" id="PS51195">
    <property type="entry name" value="Q_MOTIF"/>
    <property type="match status" value="1"/>
</dbReference>
<evidence type="ECO:0000250" key="1"/>
<evidence type="ECO:0000255" key="2">
    <source>
        <dbReference type="PROSITE-ProRule" id="PRU00541"/>
    </source>
</evidence>
<evidence type="ECO:0000255" key="3">
    <source>
        <dbReference type="PROSITE-ProRule" id="PRU00542"/>
    </source>
</evidence>
<evidence type="ECO:0000256" key="4">
    <source>
        <dbReference type="SAM" id="MobiDB-lite"/>
    </source>
</evidence>
<evidence type="ECO:0000305" key="5"/>
<sequence>MADALANQLNNTNLGEANSELRWKEQLNMPAKDARPQTEDVTATKGLEFEDFYIKRELMMGIFEAGFEKPSPIQEETIPVALTGRDILARAKNGTGKTAAFVIPTLERINPKSTKTQALILVPTRELALQTSQVCKTLGKHLGINVMVTTGGTGLMDDIIRLNDAVHILVGTPGRVLDLASKGVADLSECPTFVMDEADKLLSPEFTPVIEQLLSFHPKDRQVMLFSATFPLIVKSFKDKHMRNPYEINLMDELTLRGITQYYAFVEEKQKVHCLNTLFSKLQINQSIIFCNSTNRVELLAKKITELGYSCFYSHARMLQQHRNRVFHDFRNGVCRNLVCSDLLTRGIDIQAVNVVINFDFPKNAETYLHRIGRSGRFGHLGLAINLINWDDRFNLYKIEQELGTEIQPIPQNIDKKLYVYDSPETIPRPISNPSQQRQITNTAANTSTTDRRHHNPPNSGQYQFNRGRGSYRGRGQGQRRSAQIESNKFGHPQGQHSGKTSTAPVS</sequence>
<reference key="1">
    <citation type="journal article" date="2005" name="Nature">
        <title>Genomic sequence of the pathogenic and allergenic filamentous fungus Aspergillus fumigatus.</title>
        <authorList>
            <person name="Nierman W.C."/>
            <person name="Pain A."/>
            <person name="Anderson M.J."/>
            <person name="Wortman J.R."/>
            <person name="Kim H.S."/>
            <person name="Arroyo J."/>
            <person name="Berriman M."/>
            <person name="Abe K."/>
            <person name="Archer D.B."/>
            <person name="Bermejo C."/>
            <person name="Bennett J.W."/>
            <person name="Bowyer P."/>
            <person name="Chen D."/>
            <person name="Collins M."/>
            <person name="Coulsen R."/>
            <person name="Davies R."/>
            <person name="Dyer P.S."/>
            <person name="Farman M.L."/>
            <person name="Fedorova N."/>
            <person name="Fedorova N.D."/>
            <person name="Feldblyum T.V."/>
            <person name="Fischer R."/>
            <person name="Fosker N."/>
            <person name="Fraser A."/>
            <person name="Garcia J.L."/>
            <person name="Garcia M.J."/>
            <person name="Goble A."/>
            <person name="Goldman G.H."/>
            <person name="Gomi K."/>
            <person name="Griffith-Jones S."/>
            <person name="Gwilliam R."/>
            <person name="Haas B.J."/>
            <person name="Haas H."/>
            <person name="Harris D.E."/>
            <person name="Horiuchi H."/>
            <person name="Huang J."/>
            <person name="Humphray S."/>
            <person name="Jimenez J."/>
            <person name="Keller N."/>
            <person name="Khouri H."/>
            <person name="Kitamoto K."/>
            <person name="Kobayashi T."/>
            <person name="Konzack S."/>
            <person name="Kulkarni R."/>
            <person name="Kumagai T."/>
            <person name="Lafton A."/>
            <person name="Latge J.-P."/>
            <person name="Li W."/>
            <person name="Lord A."/>
            <person name="Lu C."/>
            <person name="Majoros W.H."/>
            <person name="May G.S."/>
            <person name="Miller B.L."/>
            <person name="Mohamoud Y."/>
            <person name="Molina M."/>
            <person name="Monod M."/>
            <person name="Mouyna I."/>
            <person name="Mulligan S."/>
            <person name="Murphy L.D."/>
            <person name="O'Neil S."/>
            <person name="Paulsen I."/>
            <person name="Penalva M.A."/>
            <person name="Pertea M."/>
            <person name="Price C."/>
            <person name="Pritchard B.L."/>
            <person name="Quail M.A."/>
            <person name="Rabbinowitsch E."/>
            <person name="Rawlins N."/>
            <person name="Rajandream M.A."/>
            <person name="Reichard U."/>
            <person name="Renauld H."/>
            <person name="Robson G.D."/>
            <person name="Rodriguez de Cordoba S."/>
            <person name="Rodriguez-Pena J.M."/>
            <person name="Ronning C.M."/>
            <person name="Rutter S."/>
            <person name="Salzberg S.L."/>
            <person name="Sanchez M."/>
            <person name="Sanchez-Ferrero J.C."/>
            <person name="Saunders D."/>
            <person name="Seeger K."/>
            <person name="Squares R."/>
            <person name="Squares S."/>
            <person name="Takeuchi M."/>
            <person name="Tekaia F."/>
            <person name="Turner G."/>
            <person name="Vazquez de Aldana C.R."/>
            <person name="Weidman J."/>
            <person name="White O."/>
            <person name="Woodward J.R."/>
            <person name="Yu J.-H."/>
            <person name="Fraser C.M."/>
            <person name="Galagan J.E."/>
            <person name="Asai K."/>
            <person name="Machida M."/>
            <person name="Hall N."/>
            <person name="Barrell B.G."/>
            <person name="Denning D.W."/>
        </authorList>
    </citation>
    <scope>NUCLEOTIDE SEQUENCE [LARGE SCALE GENOMIC DNA]</scope>
    <source>
        <strain>ATCC MYA-4609 / CBS 101355 / FGSC A1100 / Af293</strain>
    </source>
</reference>
<organism>
    <name type="scientific">Aspergillus fumigatus (strain ATCC MYA-4609 / CBS 101355 / FGSC A1100 / Af293)</name>
    <name type="common">Neosartorya fumigata</name>
    <dbReference type="NCBI Taxonomy" id="330879"/>
    <lineage>
        <taxon>Eukaryota</taxon>
        <taxon>Fungi</taxon>
        <taxon>Dikarya</taxon>
        <taxon>Ascomycota</taxon>
        <taxon>Pezizomycotina</taxon>
        <taxon>Eurotiomycetes</taxon>
        <taxon>Eurotiomycetidae</taxon>
        <taxon>Eurotiales</taxon>
        <taxon>Aspergillaceae</taxon>
        <taxon>Aspergillus</taxon>
        <taxon>Aspergillus subgen. Fumigati</taxon>
    </lineage>
</organism>
<gene>
    <name type="primary">dhh1</name>
    <name type="ORF">AFUA_3G05430</name>
</gene>